<organism>
    <name type="scientific">Saccharomyces cerevisiae (strain JAY291)</name>
    <name type="common">Baker's yeast</name>
    <dbReference type="NCBI Taxonomy" id="574961"/>
    <lineage>
        <taxon>Eukaryota</taxon>
        <taxon>Fungi</taxon>
        <taxon>Dikarya</taxon>
        <taxon>Ascomycota</taxon>
        <taxon>Saccharomycotina</taxon>
        <taxon>Saccharomycetes</taxon>
        <taxon>Saccharomycetales</taxon>
        <taxon>Saccharomycetaceae</taxon>
        <taxon>Saccharomyces</taxon>
    </lineage>
</organism>
<proteinExistence type="inferred from homology"/>
<gene>
    <name type="primary">AIM41</name>
    <name type="ORF">C1Q_04863</name>
</gene>
<keyword id="KW-0496">Mitochondrion</keyword>
<keyword id="KW-0809">Transit peptide</keyword>
<accession>C7GWG7</accession>
<sequence>MFRQSIRPLVSNRLTFIRYNSSPAYTAAVSLLKGDLKKAMIAKDEMKKTAIRNMLSAIKNKEIALKGKSADEYSLYDMYSKLISQRKDSINEFLANKRDDLVAKEQGEMDIIKKYMDQLPVSSELDIDQNVKKLLDALKTKAGEKKVQIKEIMGEIDWKSLPTEWKTSPTAIKNSIVKQFKEIFK</sequence>
<dbReference type="EMBL" id="ACFL01000381">
    <property type="protein sequence ID" value="EEU04914.1"/>
    <property type="molecule type" value="Genomic_DNA"/>
</dbReference>
<dbReference type="SMR" id="C7GWG7"/>
<dbReference type="Proteomes" id="UP000008073">
    <property type="component" value="Unassembled WGS sequence"/>
</dbReference>
<dbReference type="GO" id="GO:0005739">
    <property type="term" value="C:mitochondrion"/>
    <property type="evidence" value="ECO:0007669"/>
    <property type="project" value="UniProtKB-SubCell"/>
</dbReference>
<dbReference type="GO" id="GO:0016884">
    <property type="term" value="F:carbon-nitrogen ligase activity, with glutamine as amido-N-donor"/>
    <property type="evidence" value="ECO:0007669"/>
    <property type="project" value="InterPro"/>
</dbReference>
<dbReference type="FunFam" id="1.10.1510.10:FF:000002">
    <property type="entry name" value="Altered inheritance of mitochondria protein 41, mitochondrial"/>
    <property type="match status" value="1"/>
</dbReference>
<dbReference type="Gene3D" id="1.10.1510.10">
    <property type="entry name" value="Uncharacterised protein YqeY/AIM41 PF09424, N-terminal domain"/>
    <property type="match status" value="1"/>
</dbReference>
<dbReference type="InterPro" id="IPR003789">
    <property type="entry name" value="Asn/Gln_tRNA_amidoTrase-B-like"/>
</dbReference>
<dbReference type="InterPro" id="IPR019004">
    <property type="entry name" value="YqeY/Aim41"/>
</dbReference>
<dbReference type="InterPro" id="IPR042184">
    <property type="entry name" value="YqeY/Aim41_N"/>
</dbReference>
<dbReference type="PANTHER" id="PTHR28055">
    <property type="entry name" value="ALTERED INHERITANCE OF MITOCHONDRIA PROTEIN 41, MITOCHONDRIAL"/>
    <property type="match status" value="1"/>
</dbReference>
<dbReference type="PANTHER" id="PTHR28055:SF1">
    <property type="entry name" value="ALTERED INHERITANCE OF MITOCHONDRIA PROTEIN 41, MITOCHONDRIAL"/>
    <property type="match status" value="1"/>
</dbReference>
<dbReference type="Pfam" id="PF09424">
    <property type="entry name" value="YqeY"/>
    <property type="match status" value="1"/>
</dbReference>
<dbReference type="SUPFAM" id="SSF89095">
    <property type="entry name" value="GatB/YqeY motif"/>
    <property type="match status" value="1"/>
</dbReference>
<feature type="transit peptide" description="Mitochondrion" evidence="2">
    <location>
        <begin position="1"/>
        <end position="53"/>
    </location>
</feature>
<feature type="chain" id="PRO_0000399872" description="Altered inheritance of mitochondria protein 41, mitochondrial">
    <location>
        <begin position="54"/>
        <end position="185"/>
    </location>
</feature>
<name>AIM41_YEAS2</name>
<evidence type="ECO:0000250" key="1"/>
<evidence type="ECO:0000255" key="2"/>
<evidence type="ECO:0000305" key="3"/>
<protein>
    <recommendedName>
        <fullName>Altered inheritance of mitochondria protein 41, mitochondrial</fullName>
    </recommendedName>
</protein>
<reference key="1">
    <citation type="journal article" date="2009" name="Genome Res.">
        <title>Genome structure of a Saccharomyces cerevisiae strain widely used in bioethanol production.</title>
        <authorList>
            <person name="Argueso J.L."/>
            <person name="Carazzolle M.F."/>
            <person name="Mieczkowski P.A."/>
            <person name="Duarte F.M."/>
            <person name="Netto O.V.C."/>
            <person name="Missawa S.K."/>
            <person name="Galzerani F."/>
            <person name="Costa G.G.L."/>
            <person name="Vidal R.O."/>
            <person name="Noronha M.F."/>
            <person name="Dominska M."/>
            <person name="Andrietta M.G.S."/>
            <person name="Andrietta S.R."/>
            <person name="Cunha A.F."/>
            <person name="Gomes L.H."/>
            <person name="Tavares F.C.A."/>
            <person name="Alcarde A.R."/>
            <person name="Dietrich F.S."/>
            <person name="McCusker J.H."/>
            <person name="Petes T.D."/>
            <person name="Pereira G.A.G."/>
        </authorList>
    </citation>
    <scope>NUCLEOTIDE SEQUENCE [LARGE SCALE GENOMIC DNA]</scope>
    <source>
        <strain>JAY291</strain>
    </source>
</reference>
<comment type="subcellular location">
    <subcellularLocation>
        <location evidence="1">Mitochondrion</location>
    </subcellularLocation>
</comment>
<comment type="similarity">
    <text evidence="3">Belongs to the AIM41 family.</text>
</comment>